<reference key="1">
    <citation type="journal article" date="2009" name="PLoS Pathog.">
        <title>Genomic evidence for the evolution of Streptococcus equi: host restriction, increased virulence, and genetic exchange with human pathogens.</title>
        <authorList>
            <person name="Holden M.T.G."/>
            <person name="Heather Z."/>
            <person name="Paillot R."/>
            <person name="Steward K.F."/>
            <person name="Webb K."/>
            <person name="Ainslie F."/>
            <person name="Jourdan T."/>
            <person name="Bason N.C."/>
            <person name="Holroyd N.E."/>
            <person name="Mungall K."/>
            <person name="Quail M.A."/>
            <person name="Sanders M."/>
            <person name="Simmonds M."/>
            <person name="Willey D."/>
            <person name="Brooks K."/>
            <person name="Aanensen D.M."/>
            <person name="Spratt B.G."/>
            <person name="Jolley K.A."/>
            <person name="Maiden M.C.J."/>
            <person name="Kehoe M."/>
            <person name="Chanter N."/>
            <person name="Bentley S.D."/>
            <person name="Robinson C."/>
            <person name="Maskell D.J."/>
            <person name="Parkhill J."/>
            <person name="Waller A.S."/>
        </authorList>
    </citation>
    <scope>NUCLEOTIDE SEQUENCE [LARGE SCALE GENOMIC DNA]</scope>
    <source>
        <strain>4047</strain>
    </source>
</reference>
<feature type="chain" id="PRO_1000189833" description="Deoxyribose-phosphate aldolase">
    <location>
        <begin position="1"/>
        <end position="220"/>
    </location>
</feature>
<feature type="active site" description="Proton donor/acceptor" evidence="1">
    <location>
        <position position="89"/>
    </location>
</feature>
<feature type="active site" description="Schiff-base intermediate with acetaldehyde" evidence="1">
    <location>
        <position position="151"/>
    </location>
</feature>
<feature type="active site" description="Proton donor/acceptor" evidence="1">
    <location>
        <position position="180"/>
    </location>
</feature>
<dbReference type="EC" id="4.1.2.4" evidence="1"/>
<dbReference type="EMBL" id="FM204883">
    <property type="protein sequence ID" value="CAW93685.1"/>
    <property type="molecule type" value="Genomic_DNA"/>
</dbReference>
<dbReference type="RefSeq" id="WP_012515563.1">
    <property type="nucleotide sequence ID" value="NC_012471.1"/>
</dbReference>
<dbReference type="SMR" id="C0M9B0"/>
<dbReference type="KEGG" id="seu:SEQ_1059"/>
<dbReference type="HOGENOM" id="CLU_053595_0_2_9"/>
<dbReference type="OrthoDB" id="9778711at2"/>
<dbReference type="UniPathway" id="UPA00002">
    <property type="reaction ID" value="UER00468"/>
</dbReference>
<dbReference type="Proteomes" id="UP000001365">
    <property type="component" value="Chromosome"/>
</dbReference>
<dbReference type="GO" id="GO:0005737">
    <property type="term" value="C:cytoplasm"/>
    <property type="evidence" value="ECO:0007669"/>
    <property type="project" value="UniProtKB-SubCell"/>
</dbReference>
<dbReference type="GO" id="GO:0004139">
    <property type="term" value="F:deoxyribose-phosphate aldolase activity"/>
    <property type="evidence" value="ECO:0007669"/>
    <property type="project" value="UniProtKB-UniRule"/>
</dbReference>
<dbReference type="GO" id="GO:0006018">
    <property type="term" value="P:2-deoxyribose 1-phosphate catabolic process"/>
    <property type="evidence" value="ECO:0007669"/>
    <property type="project" value="UniProtKB-UniRule"/>
</dbReference>
<dbReference type="GO" id="GO:0016052">
    <property type="term" value="P:carbohydrate catabolic process"/>
    <property type="evidence" value="ECO:0007669"/>
    <property type="project" value="TreeGrafter"/>
</dbReference>
<dbReference type="GO" id="GO:0009264">
    <property type="term" value="P:deoxyribonucleotide catabolic process"/>
    <property type="evidence" value="ECO:0007669"/>
    <property type="project" value="InterPro"/>
</dbReference>
<dbReference type="CDD" id="cd00959">
    <property type="entry name" value="DeoC"/>
    <property type="match status" value="1"/>
</dbReference>
<dbReference type="FunFam" id="3.20.20.70:FF:000044">
    <property type="entry name" value="Deoxyribose-phosphate aldolase"/>
    <property type="match status" value="1"/>
</dbReference>
<dbReference type="Gene3D" id="3.20.20.70">
    <property type="entry name" value="Aldolase class I"/>
    <property type="match status" value="1"/>
</dbReference>
<dbReference type="HAMAP" id="MF_00114">
    <property type="entry name" value="DeoC_type1"/>
    <property type="match status" value="1"/>
</dbReference>
<dbReference type="InterPro" id="IPR013785">
    <property type="entry name" value="Aldolase_TIM"/>
</dbReference>
<dbReference type="InterPro" id="IPR011343">
    <property type="entry name" value="DeoC"/>
</dbReference>
<dbReference type="InterPro" id="IPR002915">
    <property type="entry name" value="DeoC/FbaB/LacD_aldolase"/>
</dbReference>
<dbReference type="InterPro" id="IPR028581">
    <property type="entry name" value="DeoC_typeI"/>
</dbReference>
<dbReference type="NCBIfam" id="TIGR00126">
    <property type="entry name" value="deoC"/>
    <property type="match status" value="1"/>
</dbReference>
<dbReference type="PANTHER" id="PTHR10889">
    <property type="entry name" value="DEOXYRIBOSE-PHOSPHATE ALDOLASE"/>
    <property type="match status" value="1"/>
</dbReference>
<dbReference type="PANTHER" id="PTHR10889:SF1">
    <property type="entry name" value="DEOXYRIBOSE-PHOSPHATE ALDOLASE"/>
    <property type="match status" value="1"/>
</dbReference>
<dbReference type="Pfam" id="PF01791">
    <property type="entry name" value="DeoC"/>
    <property type="match status" value="1"/>
</dbReference>
<dbReference type="PIRSF" id="PIRSF001357">
    <property type="entry name" value="DeoC"/>
    <property type="match status" value="1"/>
</dbReference>
<dbReference type="SMART" id="SM01133">
    <property type="entry name" value="DeoC"/>
    <property type="match status" value="1"/>
</dbReference>
<dbReference type="SUPFAM" id="SSF51569">
    <property type="entry name" value="Aldolase"/>
    <property type="match status" value="1"/>
</dbReference>
<evidence type="ECO:0000255" key="1">
    <source>
        <dbReference type="HAMAP-Rule" id="MF_00114"/>
    </source>
</evidence>
<name>DEOC_STRE4</name>
<keyword id="KW-0963">Cytoplasm</keyword>
<keyword id="KW-0456">Lyase</keyword>
<keyword id="KW-0704">Schiff base</keyword>
<gene>
    <name evidence="1" type="primary">deoC</name>
    <name type="ordered locus">SEQ_1059</name>
</gene>
<organism>
    <name type="scientific">Streptococcus equi subsp. equi (strain 4047)</name>
    <dbReference type="NCBI Taxonomy" id="553482"/>
    <lineage>
        <taxon>Bacteria</taxon>
        <taxon>Bacillati</taxon>
        <taxon>Bacillota</taxon>
        <taxon>Bacilli</taxon>
        <taxon>Lactobacillales</taxon>
        <taxon>Streptococcaceae</taxon>
        <taxon>Streptococcus</taxon>
    </lineage>
</organism>
<sequence>MNINKYIDHTLLKADSVQSQLDQLIEEAKAYDFASVCVNPCWVAYAAKALKGTDVKVCTVVGFPLGATTSATKAFETKDAIENGADEIDMVINIGLLKQGDYQAVEDDMRAVVEASGDKLVKVIIEACLLTDDEKVKACQLAVNAGVDFVKTSTGFSTGGATVSDVKLMRQTVGPDIGVKAAGGARSLEDALAFVEAGATRIGTSAGVTIMKGEVANGGY</sequence>
<accession>C0M9B0</accession>
<proteinExistence type="inferred from homology"/>
<protein>
    <recommendedName>
        <fullName evidence="1">Deoxyribose-phosphate aldolase</fullName>
        <shortName evidence="1">DERA</shortName>
        <ecNumber evidence="1">4.1.2.4</ecNumber>
    </recommendedName>
    <alternativeName>
        <fullName evidence="1">2-deoxy-D-ribose 5-phosphate aldolase</fullName>
    </alternativeName>
    <alternativeName>
        <fullName evidence="1">Phosphodeoxyriboaldolase</fullName>
        <shortName evidence="1">Deoxyriboaldolase</shortName>
    </alternativeName>
</protein>
<comment type="function">
    <text evidence="1">Catalyzes a reversible aldol reaction between acetaldehyde and D-glyceraldehyde 3-phosphate to generate 2-deoxy-D-ribose 5-phosphate.</text>
</comment>
<comment type="catalytic activity">
    <reaction evidence="1">
        <text>2-deoxy-D-ribose 5-phosphate = D-glyceraldehyde 3-phosphate + acetaldehyde</text>
        <dbReference type="Rhea" id="RHEA:12821"/>
        <dbReference type="ChEBI" id="CHEBI:15343"/>
        <dbReference type="ChEBI" id="CHEBI:59776"/>
        <dbReference type="ChEBI" id="CHEBI:62877"/>
        <dbReference type="EC" id="4.1.2.4"/>
    </reaction>
</comment>
<comment type="pathway">
    <text evidence="1">Carbohydrate degradation; 2-deoxy-D-ribose 1-phosphate degradation; D-glyceraldehyde 3-phosphate and acetaldehyde from 2-deoxy-alpha-D-ribose 1-phosphate: step 2/2.</text>
</comment>
<comment type="subcellular location">
    <subcellularLocation>
        <location evidence="1">Cytoplasm</location>
    </subcellularLocation>
</comment>
<comment type="similarity">
    <text evidence="1">Belongs to the DeoC/FbaB aldolase family. DeoC type 1 subfamily.</text>
</comment>